<accession>Q6ENI6</accession>
<comment type="function">
    <text evidence="1">One of the components of the core complex of photosystem II (PSII). PSII is a light-driven water:plastoquinone oxidoreductase that uses light energy to abstract electrons from H(2)O, generating O(2) and a proton gradient subsequently used for ATP formation. It consists of a core antenna complex that captures photons, and an electron transfer chain that converts photonic excitation into a charge separation. This subunit is found at the monomer-monomer interface.</text>
</comment>
<comment type="subunit">
    <text evidence="1">PSII is composed of 1 copy each of membrane proteins PsbA, PsbB, PsbC, PsbD, PsbE, PsbF, PsbH, PsbI, PsbJ, PsbK, PsbL, PsbM, PsbT, PsbX, PsbY, PsbZ, Psb30/Ycf12, at least 3 peripheral proteins of the oxygen-evolving complex and a large number of cofactors. It forms dimeric complexes.</text>
</comment>
<comment type="subcellular location">
    <subcellularLocation>
        <location evidence="1">Plastid</location>
        <location evidence="1">Chloroplast thylakoid membrane</location>
        <topology evidence="1">Single-pass membrane protein</topology>
    </subcellularLocation>
</comment>
<comment type="similarity">
    <text evidence="1">Belongs to the PsbM family.</text>
</comment>
<name>PSBM_ORYNI</name>
<feature type="chain" id="PRO_0000217565" description="Photosystem II reaction center protein M">
    <location>
        <begin position="1"/>
        <end position="34"/>
    </location>
</feature>
<feature type="transmembrane region" description="Helical" evidence="1">
    <location>
        <begin position="5"/>
        <end position="25"/>
    </location>
</feature>
<reference key="1">
    <citation type="journal article" date="2004" name="Gene">
        <title>The complete nucleotide sequence of wild rice (Oryza nivara) chloroplast genome: first genome wide comparative sequence analysis of wild and cultivated rice.</title>
        <authorList>
            <person name="Masood M.S."/>
            <person name="Nishikawa T."/>
            <person name="Fukuoka S."/>
            <person name="Njenga P.K."/>
            <person name="Tsudzuki T."/>
            <person name="Kadowaki K."/>
        </authorList>
    </citation>
    <scope>NUCLEOTIDE SEQUENCE [LARGE SCALE GENOMIC DNA]</scope>
    <source>
        <strain evidence="2">cv. SL10</strain>
    </source>
</reference>
<geneLocation type="chloroplast"/>
<sequence>MEVNILAFIATALFILVPTAFLLIIYVKTVSQND</sequence>
<keyword id="KW-0150">Chloroplast</keyword>
<keyword id="KW-0472">Membrane</keyword>
<keyword id="KW-0602">Photosynthesis</keyword>
<keyword id="KW-0604">Photosystem II</keyword>
<keyword id="KW-0934">Plastid</keyword>
<keyword id="KW-0674">Reaction center</keyword>
<keyword id="KW-1185">Reference proteome</keyword>
<keyword id="KW-0793">Thylakoid</keyword>
<keyword id="KW-0812">Transmembrane</keyword>
<keyword id="KW-1133">Transmembrane helix</keyword>
<protein>
    <recommendedName>
        <fullName evidence="1">Photosystem II reaction center protein M</fullName>
        <shortName evidence="1">PSII-M</shortName>
    </recommendedName>
</protein>
<proteinExistence type="inferred from homology"/>
<gene>
    <name evidence="1" type="primary">psbM</name>
</gene>
<dbReference type="EMBL" id="AP006728">
    <property type="protein sequence ID" value="BAD26766.1"/>
    <property type="molecule type" value="Genomic_DNA"/>
</dbReference>
<dbReference type="RefSeq" id="YP_052737.1">
    <property type="nucleotide sequence ID" value="NC_005973.1"/>
</dbReference>
<dbReference type="SMR" id="Q6ENI6"/>
<dbReference type="STRING" id="4536.Q6ENI6"/>
<dbReference type="GeneID" id="2885919"/>
<dbReference type="Proteomes" id="UP000006591">
    <property type="component" value="Chloroplast"/>
</dbReference>
<dbReference type="GO" id="GO:0009535">
    <property type="term" value="C:chloroplast thylakoid membrane"/>
    <property type="evidence" value="ECO:0007669"/>
    <property type="project" value="UniProtKB-SubCell"/>
</dbReference>
<dbReference type="GO" id="GO:0009523">
    <property type="term" value="C:photosystem II"/>
    <property type="evidence" value="ECO:0007669"/>
    <property type="project" value="UniProtKB-KW"/>
</dbReference>
<dbReference type="GO" id="GO:0009536">
    <property type="term" value="C:plastid"/>
    <property type="evidence" value="ECO:0000305"/>
    <property type="project" value="Gramene"/>
</dbReference>
<dbReference type="GO" id="GO:0019684">
    <property type="term" value="P:photosynthesis, light reaction"/>
    <property type="evidence" value="ECO:0007669"/>
    <property type="project" value="InterPro"/>
</dbReference>
<dbReference type="HAMAP" id="MF_00438">
    <property type="entry name" value="PSII_PsbM"/>
    <property type="match status" value="1"/>
</dbReference>
<dbReference type="InterPro" id="IPR007826">
    <property type="entry name" value="PSII_PsbM"/>
</dbReference>
<dbReference type="InterPro" id="IPR037269">
    <property type="entry name" value="PSII_PsbM_sf"/>
</dbReference>
<dbReference type="NCBIfam" id="TIGR03038">
    <property type="entry name" value="PS_II_psbM"/>
    <property type="match status" value="1"/>
</dbReference>
<dbReference type="PANTHER" id="PTHR35774">
    <property type="entry name" value="PHOTOSYSTEM II REACTION CENTER PROTEIN M"/>
    <property type="match status" value="1"/>
</dbReference>
<dbReference type="PANTHER" id="PTHR35774:SF1">
    <property type="entry name" value="PHOTOSYSTEM II REACTION CENTER PROTEIN M"/>
    <property type="match status" value="1"/>
</dbReference>
<dbReference type="Pfam" id="PF05151">
    <property type="entry name" value="PsbM"/>
    <property type="match status" value="1"/>
</dbReference>
<dbReference type="SUPFAM" id="SSF161033">
    <property type="entry name" value="Photosystem II reaction center protein M, PsbM"/>
    <property type="match status" value="1"/>
</dbReference>
<evidence type="ECO:0000255" key="1">
    <source>
        <dbReference type="HAMAP-Rule" id="MF_00438"/>
    </source>
</evidence>
<evidence type="ECO:0000312" key="2">
    <source>
        <dbReference type="Proteomes" id="UP000006591"/>
    </source>
</evidence>
<organism>
    <name type="scientific">Oryza nivara</name>
    <name type="common">Indian wild rice</name>
    <name type="synonym">Oryza sativa f. spontanea</name>
    <dbReference type="NCBI Taxonomy" id="4536"/>
    <lineage>
        <taxon>Eukaryota</taxon>
        <taxon>Viridiplantae</taxon>
        <taxon>Streptophyta</taxon>
        <taxon>Embryophyta</taxon>
        <taxon>Tracheophyta</taxon>
        <taxon>Spermatophyta</taxon>
        <taxon>Magnoliopsida</taxon>
        <taxon>Liliopsida</taxon>
        <taxon>Poales</taxon>
        <taxon>Poaceae</taxon>
        <taxon>BOP clade</taxon>
        <taxon>Oryzoideae</taxon>
        <taxon>Oryzeae</taxon>
        <taxon>Oryzinae</taxon>
        <taxon>Oryza</taxon>
    </lineage>
</organism>